<keyword id="KW-1185">Reference proteome</keyword>
<keyword id="KW-0686">Riboflavin biosynthesis</keyword>
<keyword id="KW-0808">Transferase</keyword>
<feature type="chain" id="PRO_0000134773" description="6,7-dimethyl-8-ribityllumazine synthase">
    <location>
        <begin position="1"/>
        <end position="160"/>
    </location>
</feature>
<feature type="active site" description="Proton donor" evidence="1">
    <location>
        <position position="89"/>
    </location>
</feature>
<feature type="binding site" evidence="1">
    <location>
        <position position="27"/>
    </location>
    <ligand>
        <name>5-amino-6-(D-ribitylamino)uracil</name>
        <dbReference type="ChEBI" id="CHEBI:15934"/>
    </ligand>
</feature>
<feature type="binding site" evidence="1">
    <location>
        <begin position="59"/>
        <end position="61"/>
    </location>
    <ligand>
        <name>5-amino-6-(D-ribitylamino)uracil</name>
        <dbReference type="ChEBI" id="CHEBI:15934"/>
    </ligand>
</feature>
<feature type="binding site" evidence="1">
    <location>
        <begin position="81"/>
        <end position="83"/>
    </location>
    <ligand>
        <name>5-amino-6-(D-ribitylamino)uracil</name>
        <dbReference type="ChEBI" id="CHEBI:15934"/>
    </ligand>
</feature>
<feature type="binding site" evidence="1">
    <location>
        <begin position="86"/>
        <end position="87"/>
    </location>
    <ligand>
        <name>(2S)-2-hydroxy-3-oxobutyl phosphate</name>
        <dbReference type="ChEBI" id="CHEBI:58830"/>
    </ligand>
</feature>
<feature type="binding site" evidence="1">
    <location>
        <position position="114"/>
    </location>
    <ligand>
        <name>5-amino-6-(D-ribitylamino)uracil</name>
        <dbReference type="ChEBI" id="CHEBI:15934"/>
    </ligand>
</feature>
<feature type="binding site" evidence="1">
    <location>
        <position position="128"/>
    </location>
    <ligand>
        <name>(2S)-2-hydroxy-3-oxobutyl phosphate</name>
        <dbReference type="ChEBI" id="CHEBI:58830"/>
    </ligand>
</feature>
<sequence length="160" mass="16371">MKGGAGVPDLPSLDASGVRLAIVASSWHGKICDALLDGARKVAAGCGLDDPTVVRVLGAIEIPVVAQELARNHDAVVALGVVIRGQTPHFDYVCDAVTQGLTRVSLDSSTPIANGVLTTNTEEQALDRAGLPTSAEDKGAQATVAALATALTLRELRAHS</sequence>
<dbReference type="EC" id="2.5.1.78" evidence="1"/>
<dbReference type="EMBL" id="LT708304">
    <property type="protein sequence ID" value="SIU00054.1"/>
    <property type="status" value="ALT_INIT"/>
    <property type="molecule type" value="Genomic_DNA"/>
</dbReference>
<dbReference type="RefSeq" id="NP_855103.1">
    <property type="nucleotide sequence ID" value="NC_002945.3"/>
</dbReference>
<dbReference type="RefSeq" id="WP_003898872.1">
    <property type="nucleotide sequence ID" value="NC_002945.4"/>
</dbReference>
<dbReference type="SMR" id="P66035"/>
<dbReference type="KEGG" id="mbo:BQ2027_MB1451"/>
<dbReference type="PATRIC" id="fig|233413.5.peg.1586"/>
<dbReference type="UniPathway" id="UPA00275">
    <property type="reaction ID" value="UER00404"/>
</dbReference>
<dbReference type="Proteomes" id="UP000001419">
    <property type="component" value="Chromosome"/>
</dbReference>
<dbReference type="GO" id="GO:0005829">
    <property type="term" value="C:cytosol"/>
    <property type="evidence" value="ECO:0007669"/>
    <property type="project" value="TreeGrafter"/>
</dbReference>
<dbReference type="GO" id="GO:0009349">
    <property type="term" value="C:riboflavin synthase complex"/>
    <property type="evidence" value="ECO:0007669"/>
    <property type="project" value="InterPro"/>
</dbReference>
<dbReference type="GO" id="GO:0000906">
    <property type="term" value="F:6,7-dimethyl-8-ribityllumazine synthase activity"/>
    <property type="evidence" value="ECO:0007669"/>
    <property type="project" value="UniProtKB-UniRule"/>
</dbReference>
<dbReference type="GO" id="GO:0009231">
    <property type="term" value="P:riboflavin biosynthetic process"/>
    <property type="evidence" value="ECO:0007669"/>
    <property type="project" value="UniProtKB-UniRule"/>
</dbReference>
<dbReference type="CDD" id="cd09209">
    <property type="entry name" value="Lumazine_synthase-I"/>
    <property type="match status" value="1"/>
</dbReference>
<dbReference type="FunFam" id="3.40.50.960:FF:000002">
    <property type="entry name" value="6,7-dimethyl-8-ribityllumazine synthase"/>
    <property type="match status" value="1"/>
</dbReference>
<dbReference type="Gene3D" id="3.40.50.960">
    <property type="entry name" value="Lumazine/riboflavin synthase"/>
    <property type="match status" value="1"/>
</dbReference>
<dbReference type="HAMAP" id="MF_00178">
    <property type="entry name" value="Lumazine_synth"/>
    <property type="match status" value="1"/>
</dbReference>
<dbReference type="InterPro" id="IPR034964">
    <property type="entry name" value="LS"/>
</dbReference>
<dbReference type="InterPro" id="IPR002180">
    <property type="entry name" value="LS/RS"/>
</dbReference>
<dbReference type="InterPro" id="IPR036467">
    <property type="entry name" value="LS/RS_sf"/>
</dbReference>
<dbReference type="NCBIfam" id="TIGR00114">
    <property type="entry name" value="lumazine-synth"/>
    <property type="match status" value="1"/>
</dbReference>
<dbReference type="PANTHER" id="PTHR21058:SF0">
    <property type="entry name" value="6,7-DIMETHYL-8-RIBITYLLUMAZINE SYNTHASE"/>
    <property type="match status" value="1"/>
</dbReference>
<dbReference type="PANTHER" id="PTHR21058">
    <property type="entry name" value="6,7-DIMETHYL-8-RIBITYLLUMAZINE SYNTHASE DMRL SYNTHASE LUMAZINE SYNTHASE"/>
    <property type="match status" value="1"/>
</dbReference>
<dbReference type="Pfam" id="PF00885">
    <property type="entry name" value="DMRL_synthase"/>
    <property type="match status" value="1"/>
</dbReference>
<dbReference type="SUPFAM" id="SSF52121">
    <property type="entry name" value="Lumazine synthase"/>
    <property type="match status" value="1"/>
</dbReference>
<organism>
    <name type="scientific">Mycobacterium bovis (strain ATCC BAA-935 / AF2122/97)</name>
    <dbReference type="NCBI Taxonomy" id="233413"/>
    <lineage>
        <taxon>Bacteria</taxon>
        <taxon>Bacillati</taxon>
        <taxon>Actinomycetota</taxon>
        <taxon>Actinomycetes</taxon>
        <taxon>Mycobacteriales</taxon>
        <taxon>Mycobacteriaceae</taxon>
        <taxon>Mycobacterium</taxon>
        <taxon>Mycobacterium tuberculosis complex</taxon>
    </lineage>
</organism>
<evidence type="ECO:0000255" key="1">
    <source>
        <dbReference type="HAMAP-Rule" id="MF_00178"/>
    </source>
</evidence>
<evidence type="ECO:0000305" key="2"/>
<reference key="1">
    <citation type="journal article" date="2003" name="Proc. Natl. Acad. Sci. U.S.A.">
        <title>The complete genome sequence of Mycobacterium bovis.</title>
        <authorList>
            <person name="Garnier T."/>
            <person name="Eiglmeier K."/>
            <person name="Camus J.-C."/>
            <person name="Medina N."/>
            <person name="Mansoor H."/>
            <person name="Pryor M."/>
            <person name="Duthoy S."/>
            <person name="Grondin S."/>
            <person name="Lacroix C."/>
            <person name="Monsempe C."/>
            <person name="Simon S."/>
            <person name="Harris B."/>
            <person name="Atkin R."/>
            <person name="Doggett J."/>
            <person name="Mayes R."/>
            <person name="Keating L."/>
            <person name="Wheeler P.R."/>
            <person name="Parkhill J."/>
            <person name="Barrell B.G."/>
            <person name="Cole S.T."/>
            <person name="Gordon S.V."/>
            <person name="Hewinson R.G."/>
        </authorList>
    </citation>
    <scope>NUCLEOTIDE SEQUENCE [LARGE SCALE GENOMIC DNA]</scope>
    <source>
        <strain>ATCC BAA-935 / AF2122/97</strain>
    </source>
</reference>
<reference key="2">
    <citation type="journal article" date="2017" name="Genome Announc.">
        <title>Updated reference genome sequence and annotation of Mycobacterium bovis AF2122/97.</title>
        <authorList>
            <person name="Malone K.M."/>
            <person name="Farrell D."/>
            <person name="Stuber T.P."/>
            <person name="Schubert O.T."/>
            <person name="Aebersold R."/>
            <person name="Robbe-Austerman S."/>
            <person name="Gordon S.V."/>
        </authorList>
    </citation>
    <scope>NUCLEOTIDE SEQUENCE [LARGE SCALE GENOMIC DNA]</scope>
    <scope>GENOME REANNOTATION</scope>
    <source>
        <strain>ATCC BAA-935 / AF2122/97</strain>
    </source>
</reference>
<proteinExistence type="inferred from homology"/>
<gene>
    <name evidence="1" type="primary">ribH</name>
    <name type="ordered locus">BQ2027_MB1451</name>
</gene>
<accession>P66035</accession>
<accession>A0A1R3XZ99</accession>
<accession>P71685</accession>
<accession>X2BHU4</accession>
<comment type="function">
    <text evidence="1">Catalyzes the formation of 6,7-dimethyl-8-ribityllumazine by condensation of 5-amino-6-(D-ribitylamino)uracil with 3,4-dihydroxy-2-butanone 4-phosphate. This is the penultimate step in the biosynthesis of riboflavin.</text>
</comment>
<comment type="catalytic activity">
    <reaction evidence="1">
        <text>(2S)-2-hydroxy-3-oxobutyl phosphate + 5-amino-6-(D-ribitylamino)uracil = 6,7-dimethyl-8-(1-D-ribityl)lumazine + phosphate + 2 H2O + H(+)</text>
        <dbReference type="Rhea" id="RHEA:26152"/>
        <dbReference type="ChEBI" id="CHEBI:15377"/>
        <dbReference type="ChEBI" id="CHEBI:15378"/>
        <dbReference type="ChEBI" id="CHEBI:15934"/>
        <dbReference type="ChEBI" id="CHEBI:43474"/>
        <dbReference type="ChEBI" id="CHEBI:58201"/>
        <dbReference type="ChEBI" id="CHEBI:58830"/>
        <dbReference type="EC" id="2.5.1.78"/>
    </reaction>
</comment>
<comment type="pathway">
    <text evidence="1">Cofactor biosynthesis; riboflavin biosynthesis; riboflavin from 2-hydroxy-3-oxobutyl phosphate and 5-amino-6-(D-ribitylamino)uracil: step 1/2.</text>
</comment>
<comment type="subunit">
    <text evidence="1">Homopentamer.</text>
</comment>
<comment type="similarity">
    <text evidence="1">Belongs to the DMRL synthase family.</text>
</comment>
<comment type="sequence caution" evidence="2">
    <conflict type="erroneous initiation">
        <sequence resource="EMBL-CDS" id="SIU00054"/>
    </conflict>
    <text>Truncated N-terminus.</text>
</comment>
<protein>
    <recommendedName>
        <fullName evidence="1">6,7-dimethyl-8-ribityllumazine synthase</fullName>
        <shortName evidence="1">DMRL synthase</shortName>
        <shortName evidence="1">LS</shortName>
        <shortName evidence="1">Lumazine synthase</shortName>
        <ecNumber evidence="1">2.5.1.78</ecNumber>
    </recommendedName>
</protein>
<name>RISB_MYCBO</name>